<dbReference type="EMBL" id="AK012610">
    <property type="protein sequence ID" value="BAB28353.1"/>
    <property type="molecule type" value="mRNA"/>
</dbReference>
<dbReference type="EMBL" id="BC026668">
    <property type="protein sequence ID" value="AAH26668.1"/>
    <property type="molecule type" value="mRNA"/>
</dbReference>
<dbReference type="CCDS" id="CCDS23570.1"/>
<dbReference type="RefSeq" id="NP_082588.2">
    <property type="nucleotide sequence ID" value="NM_028312.3"/>
</dbReference>
<dbReference type="RefSeq" id="XP_030100495.1">
    <property type="nucleotide sequence ID" value="XM_030244635.1"/>
</dbReference>
<dbReference type="RefSeq" id="XP_030100496.1">
    <property type="nucleotide sequence ID" value="XM_030244636.1"/>
</dbReference>
<dbReference type="SMR" id="Q8R344"/>
<dbReference type="BioGRID" id="215492">
    <property type="interactions" value="28"/>
</dbReference>
<dbReference type="FunCoup" id="Q8R344">
    <property type="interactions" value="2243"/>
</dbReference>
<dbReference type="IntAct" id="Q8R344">
    <property type="interactions" value="27"/>
</dbReference>
<dbReference type="STRING" id="10090.ENSMUSP00000019803"/>
<dbReference type="iPTMnet" id="Q8R344"/>
<dbReference type="PhosphoSitePlus" id="Q8R344"/>
<dbReference type="SwissPalm" id="Q8R344"/>
<dbReference type="jPOST" id="Q8R344"/>
<dbReference type="PaxDb" id="10090-ENSMUSP00000019803"/>
<dbReference type="PeptideAtlas" id="Q8R344"/>
<dbReference type="ProteomicsDB" id="281415"/>
<dbReference type="Pumba" id="Q8R344"/>
<dbReference type="Antibodypedia" id="58026">
    <property type="antibodies" value="108 antibodies from 17 providers"/>
</dbReference>
<dbReference type="DNASU" id="72654"/>
<dbReference type="Ensembl" id="ENSMUST00000019803.9">
    <property type="protein sequence ID" value="ENSMUSP00000019803.5"/>
    <property type="gene ID" value="ENSMUSG00000019659.9"/>
</dbReference>
<dbReference type="GeneID" id="72654"/>
<dbReference type="KEGG" id="mmu:72654"/>
<dbReference type="UCSC" id="uc009rum.2">
    <property type="organism name" value="mouse"/>
</dbReference>
<dbReference type="AGR" id="MGI:1919904"/>
<dbReference type="CTD" id="151903"/>
<dbReference type="MGI" id="MGI:1919904">
    <property type="gene designation" value="Ccdc12"/>
</dbReference>
<dbReference type="VEuPathDB" id="HostDB:ENSMUSG00000019659"/>
<dbReference type="eggNOG" id="KOG3407">
    <property type="taxonomic scope" value="Eukaryota"/>
</dbReference>
<dbReference type="GeneTree" id="ENSGT00390000011619"/>
<dbReference type="HOGENOM" id="CLU_091076_3_0_1"/>
<dbReference type="InParanoid" id="Q8R344"/>
<dbReference type="OMA" id="KPHNETT"/>
<dbReference type="OrthoDB" id="10261348at2759"/>
<dbReference type="PhylomeDB" id="Q8R344"/>
<dbReference type="TreeFam" id="TF318049"/>
<dbReference type="Reactome" id="R-MMU-72163">
    <property type="pathway name" value="mRNA Splicing - Major Pathway"/>
</dbReference>
<dbReference type="BioGRID-ORCS" id="72654">
    <property type="hits" value="27 hits in 78 CRISPR screens"/>
</dbReference>
<dbReference type="ChiTaRS" id="Ccdc12">
    <property type="organism name" value="mouse"/>
</dbReference>
<dbReference type="PRO" id="PR:Q8R344"/>
<dbReference type="Proteomes" id="UP000000589">
    <property type="component" value="Chromosome 9"/>
</dbReference>
<dbReference type="RNAct" id="Q8R344">
    <property type="molecule type" value="protein"/>
</dbReference>
<dbReference type="Bgee" id="ENSMUSG00000019659">
    <property type="expression patterns" value="Expressed in granulocyte and 205 other cell types or tissues"/>
</dbReference>
<dbReference type="ExpressionAtlas" id="Q8R344">
    <property type="expression patterns" value="baseline and differential"/>
</dbReference>
<dbReference type="InterPro" id="IPR013169">
    <property type="entry name" value="mRNA_splic_Cwf18-like"/>
</dbReference>
<dbReference type="PANTHER" id="PTHR31551:SF1">
    <property type="entry name" value="COILED-COIL DOMAIN-CONTAINING PROTEIN 12"/>
    <property type="match status" value="1"/>
</dbReference>
<dbReference type="PANTHER" id="PTHR31551">
    <property type="entry name" value="PRE-MRNA-SPLICING FACTOR CWF18"/>
    <property type="match status" value="1"/>
</dbReference>
<dbReference type="Pfam" id="PF08315">
    <property type="entry name" value="cwf18"/>
    <property type="match status" value="1"/>
</dbReference>
<reference key="1">
    <citation type="journal article" date="2005" name="Science">
        <title>The transcriptional landscape of the mammalian genome.</title>
        <authorList>
            <person name="Carninci P."/>
            <person name="Kasukawa T."/>
            <person name="Katayama S."/>
            <person name="Gough J."/>
            <person name="Frith M.C."/>
            <person name="Maeda N."/>
            <person name="Oyama R."/>
            <person name="Ravasi T."/>
            <person name="Lenhard B."/>
            <person name="Wells C."/>
            <person name="Kodzius R."/>
            <person name="Shimokawa K."/>
            <person name="Bajic V.B."/>
            <person name="Brenner S.E."/>
            <person name="Batalov S."/>
            <person name="Forrest A.R."/>
            <person name="Zavolan M."/>
            <person name="Davis M.J."/>
            <person name="Wilming L.G."/>
            <person name="Aidinis V."/>
            <person name="Allen J.E."/>
            <person name="Ambesi-Impiombato A."/>
            <person name="Apweiler R."/>
            <person name="Aturaliya R.N."/>
            <person name="Bailey T.L."/>
            <person name="Bansal M."/>
            <person name="Baxter L."/>
            <person name="Beisel K.W."/>
            <person name="Bersano T."/>
            <person name="Bono H."/>
            <person name="Chalk A.M."/>
            <person name="Chiu K.P."/>
            <person name="Choudhary V."/>
            <person name="Christoffels A."/>
            <person name="Clutterbuck D.R."/>
            <person name="Crowe M.L."/>
            <person name="Dalla E."/>
            <person name="Dalrymple B.P."/>
            <person name="de Bono B."/>
            <person name="Della Gatta G."/>
            <person name="di Bernardo D."/>
            <person name="Down T."/>
            <person name="Engstrom P."/>
            <person name="Fagiolini M."/>
            <person name="Faulkner G."/>
            <person name="Fletcher C.F."/>
            <person name="Fukushima T."/>
            <person name="Furuno M."/>
            <person name="Futaki S."/>
            <person name="Gariboldi M."/>
            <person name="Georgii-Hemming P."/>
            <person name="Gingeras T.R."/>
            <person name="Gojobori T."/>
            <person name="Green R.E."/>
            <person name="Gustincich S."/>
            <person name="Harbers M."/>
            <person name="Hayashi Y."/>
            <person name="Hensch T.K."/>
            <person name="Hirokawa N."/>
            <person name="Hill D."/>
            <person name="Huminiecki L."/>
            <person name="Iacono M."/>
            <person name="Ikeo K."/>
            <person name="Iwama A."/>
            <person name="Ishikawa T."/>
            <person name="Jakt M."/>
            <person name="Kanapin A."/>
            <person name="Katoh M."/>
            <person name="Kawasawa Y."/>
            <person name="Kelso J."/>
            <person name="Kitamura H."/>
            <person name="Kitano H."/>
            <person name="Kollias G."/>
            <person name="Krishnan S.P."/>
            <person name="Kruger A."/>
            <person name="Kummerfeld S.K."/>
            <person name="Kurochkin I.V."/>
            <person name="Lareau L.F."/>
            <person name="Lazarevic D."/>
            <person name="Lipovich L."/>
            <person name="Liu J."/>
            <person name="Liuni S."/>
            <person name="McWilliam S."/>
            <person name="Madan Babu M."/>
            <person name="Madera M."/>
            <person name="Marchionni L."/>
            <person name="Matsuda H."/>
            <person name="Matsuzawa S."/>
            <person name="Miki H."/>
            <person name="Mignone F."/>
            <person name="Miyake S."/>
            <person name="Morris K."/>
            <person name="Mottagui-Tabar S."/>
            <person name="Mulder N."/>
            <person name="Nakano N."/>
            <person name="Nakauchi H."/>
            <person name="Ng P."/>
            <person name="Nilsson R."/>
            <person name="Nishiguchi S."/>
            <person name="Nishikawa S."/>
            <person name="Nori F."/>
            <person name="Ohara O."/>
            <person name="Okazaki Y."/>
            <person name="Orlando V."/>
            <person name="Pang K.C."/>
            <person name="Pavan W.J."/>
            <person name="Pavesi G."/>
            <person name="Pesole G."/>
            <person name="Petrovsky N."/>
            <person name="Piazza S."/>
            <person name="Reed J."/>
            <person name="Reid J.F."/>
            <person name="Ring B.Z."/>
            <person name="Ringwald M."/>
            <person name="Rost B."/>
            <person name="Ruan Y."/>
            <person name="Salzberg S.L."/>
            <person name="Sandelin A."/>
            <person name="Schneider C."/>
            <person name="Schoenbach C."/>
            <person name="Sekiguchi K."/>
            <person name="Semple C.A."/>
            <person name="Seno S."/>
            <person name="Sessa L."/>
            <person name="Sheng Y."/>
            <person name="Shibata Y."/>
            <person name="Shimada H."/>
            <person name="Shimada K."/>
            <person name="Silva D."/>
            <person name="Sinclair B."/>
            <person name="Sperling S."/>
            <person name="Stupka E."/>
            <person name="Sugiura K."/>
            <person name="Sultana R."/>
            <person name="Takenaka Y."/>
            <person name="Taki K."/>
            <person name="Tammoja K."/>
            <person name="Tan S.L."/>
            <person name="Tang S."/>
            <person name="Taylor M.S."/>
            <person name="Tegner J."/>
            <person name="Teichmann S.A."/>
            <person name="Ueda H.R."/>
            <person name="van Nimwegen E."/>
            <person name="Verardo R."/>
            <person name="Wei C.L."/>
            <person name="Yagi K."/>
            <person name="Yamanishi H."/>
            <person name="Zabarovsky E."/>
            <person name="Zhu S."/>
            <person name="Zimmer A."/>
            <person name="Hide W."/>
            <person name="Bult C."/>
            <person name="Grimmond S.M."/>
            <person name="Teasdale R.D."/>
            <person name="Liu E.T."/>
            <person name="Brusic V."/>
            <person name="Quackenbush J."/>
            <person name="Wahlestedt C."/>
            <person name="Mattick J.S."/>
            <person name="Hume D.A."/>
            <person name="Kai C."/>
            <person name="Sasaki D."/>
            <person name="Tomaru Y."/>
            <person name="Fukuda S."/>
            <person name="Kanamori-Katayama M."/>
            <person name="Suzuki M."/>
            <person name="Aoki J."/>
            <person name="Arakawa T."/>
            <person name="Iida J."/>
            <person name="Imamura K."/>
            <person name="Itoh M."/>
            <person name="Kato T."/>
            <person name="Kawaji H."/>
            <person name="Kawagashira N."/>
            <person name="Kawashima T."/>
            <person name="Kojima M."/>
            <person name="Kondo S."/>
            <person name="Konno H."/>
            <person name="Nakano K."/>
            <person name="Ninomiya N."/>
            <person name="Nishio T."/>
            <person name="Okada M."/>
            <person name="Plessy C."/>
            <person name="Shibata K."/>
            <person name="Shiraki T."/>
            <person name="Suzuki S."/>
            <person name="Tagami M."/>
            <person name="Waki K."/>
            <person name="Watahiki A."/>
            <person name="Okamura-Oho Y."/>
            <person name="Suzuki H."/>
            <person name="Kawai J."/>
            <person name="Hayashizaki Y."/>
        </authorList>
    </citation>
    <scope>NUCLEOTIDE SEQUENCE [LARGE SCALE MRNA]</scope>
    <source>
        <strain>C57BL/6J</strain>
    </source>
</reference>
<reference key="2">
    <citation type="journal article" date="2004" name="Genome Res.">
        <title>The status, quality, and expansion of the NIH full-length cDNA project: the Mammalian Gene Collection (MGC).</title>
        <authorList>
            <consortium name="The MGC Project Team"/>
        </authorList>
    </citation>
    <scope>NUCLEOTIDE SEQUENCE [LARGE SCALE MRNA]</scope>
    <source>
        <strain>FVB/N-3</strain>
        <tissue>Mammary tumor</tissue>
    </source>
</reference>
<reference key="3">
    <citation type="journal article" date="2010" name="Cell">
        <title>A tissue-specific atlas of mouse protein phosphorylation and expression.</title>
        <authorList>
            <person name="Huttlin E.L."/>
            <person name="Jedrychowski M.P."/>
            <person name="Elias J.E."/>
            <person name="Goswami T."/>
            <person name="Rad R."/>
            <person name="Beausoleil S.A."/>
            <person name="Villen J."/>
            <person name="Haas W."/>
            <person name="Sowa M.E."/>
            <person name="Gygi S.P."/>
        </authorList>
    </citation>
    <scope>PHOSPHORYLATION [LARGE SCALE ANALYSIS] AT SER-165</scope>
    <scope>IDENTIFICATION BY MASS SPECTROMETRY [LARGE SCALE ANALYSIS]</scope>
    <source>
        <tissue>Brain</tissue>
        <tissue>Brown adipose tissue</tissue>
        <tissue>Heart</tissue>
        <tissue>Kidney</tissue>
        <tissue>Liver</tissue>
        <tissue>Lung</tissue>
        <tissue>Pancreas</tissue>
        <tissue>Spleen</tissue>
        <tissue>Testis</tissue>
    </source>
</reference>
<reference key="4">
    <citation type="journal article" date="2013" name="Mol. Cell">
        <title>SIRT5-mediated lysine desuccinylation impacts diverse metabolic pathways.</title>
        <authorList>
            <person name="Park J."/>
            <person name="Chen Y."/>
            <person name="Tishkoff D.X."/>
            <person name="Peng C."/>
            <person name="Tan M."/>
            <person name="Dai L."/>
            <person name="Xie Z."/>
            <person name="Zhang Y."/>
            <person name="Zwaans B.M."/>
            <person name="Skinner M.E."/>
            <person name="Lombard D.B."/>
            <person name="Zhao Y."/>
        </authorList>
    </citation>
    <scope>ACETYLATION [LARGE SCALE ANALYSIS] AT LYS-53</scope>
    <scope>IDENTIFICATION BY MASS SPECTROMETRY [LARGE SCALE ANALYSIS]</scope>
    <source>
        <tissue>Embryonic fibroblast</tissue>
    </source>
</reference>
<proteinExistence type="evidence at protein level"/>
<gene>
    <name type="primary">Ccdc12</name>
</gene>
<protein>
    <recommendedName>
        <fullName>Coiled-coil domain-containing protein 12</fullName>
    </recommendedName>
</protein>
<sequence length="166" mass="18891">MAAAPAGVGRLEEEALRRKERLKALREKTGRKDREDGEPQTKQLREEGEEVGKHRGLRLRNYVPEDEDLKRRRVPQAKPVAVEEKVKEQLEAAKPEPVIEEVDLANLAPRKPDWDLKRDVAKKLEKLEKRTQRAIAELIRERLKGQEDSLASAVDATTGQEACDSD</sequence>
<feature type="chain" id="PRO_0000076192" description="Coiled-coil domain-containing protein 12">
    <location>
        <begin position="1"/>
        <end position="166"/>
    </location>
</feature>
<feature type="region of interest" description="Disordered" evidence="3">
    <location>
        <begin position="21"/>
        <end position="55"/>
    </location>
</feature>
<feature type="region of interest" description="Disordered" evidence="3">
    <location>
        <begin position="146"/>
        <end position="166"/>
    </location>
</feature>
<feature type="coiled-coil region" evidence="2">
    <location>
        <begin position="8"/>
        <end position="28"/>
    </location>
</feature>
<feature type="coiled-coil region" evidence="2">
    <location>
        <begin position="115"/>
        <end position="144"/>
    </location>
</feature>
<feature type="compositionally biased region" description="Basic and acidic residues" evidence="3">
    <location>
        <begin position="21"/>
        <end position="53"/>
    </location>
</feature>
<feature type="modified residue" description="N-acetylmethionine" evidence="1">
    <location>
        <position position="1"/>
    </location>
</feature>
<feature type="modified residue" description="N6-acetyllysine" evidence="6">
    <location>
        <position position="53"/>
    </location>
</feature>
<feature type="modified residue" description="Phosphoserine" evidence="1">
    <location>
        <position position="149"/>
    </location>
</feature>
<feature type="modified residue" description="Phosphoserine" evidence="5">
    <location>
        <position position="165"/>
    </location>
</feature>
<feature type="cross-link" description="Glycyl lysine isopeptide (Lys-Gly) (interchain with G-Cter in SUMO2)" evidence="1">
    <location>
        <position position="94"/>
    </location>
</feature>
<feature type="sequence conflict" description="In Ref. 1; BAB28353." evidence="4" ref="1">
    <original>D</original>
    <variation>N</variation>
    <location>
        <position position="119"/>
    </location>
</feature>
<feature type="sequence conflict" description="In Ref. 2; AAH26668." evidence="4" ref="2">
    <original>A</original>
    <variation>P</variation>
    <location>
        <position position="151"/>
    </location>
</feature>
<keyword id="KW-0007">Acetylation</keyword>
<keyword id="KW-0175">Coiled coil</keyword>
<keyword id="KW-1017">Isopeptide bond</keyword>
<keyword id="KW-0597">Phosphoprotein</keyword>
<keyword id="KW-1185">Reference proteome</keyword>
<keyword id="KW-0832">Ubl conjugation</keyword>
<organism>
    <name type="scientific">Mus musculus</name>
    <name type="common">Mouse</name>
    <dbReference type="NCBI Taxonomy" id="10090"/>
    <lineage>
        <taxon>Eukaryota</taxon>
        <taxon>Metazoa</taxon>
        <taxon>Chordata</taxon>
        <taxon>Craniata</taxon>
        <taxon>Vertebrata</taxon>
        <taxon>Euteleostomi</taxon>
        <taxon>Mammalia</taxon>
        <taxon>Eutheria</taxon>
        <taxon>Euarchontoglires</taxon>
        <taxon>Glires</taxon>
        <taxon>Rodentia</taxon>
        <taxon>Myomorpha</taxon>
        <taxon>Muroidea</taxon>
        <taxon>Muridae</taxon>
        <taxon>Murinae</taxon>
        <taxon>Mus</taxon>
        <taxon>Mus</taxon>
    </lineage>
</organism>
<evidence type="ECO:0000250" key="1">
    <source>
        <dbReference type="UniProtKB" id="Q8WUD4"/>
    </source>
</evidence>
<evidence type="ECO:0000255" key="2"/>
<evidence type="ECO:0000256" key="3">
    <source>
        <dbReference type="SAM" id="MobiDB-lite"/>
    </source>
</evidence>
<evidence type="ECO:0000305" key="4"/>
<evidence type="ECO:0007744" key="5">
    <source>
    </source>
</evidence>
<evidence type="ECO:0007744" key="6">
    <source>
    </source>
</evidence>
<name>CCD12_MOUSE</name>
<accession>Q8R344</accession>
<accession>Q9CZH5</accession>